<comment type="function">
    <text evidence="1">Purine salvage pathway enzyme that catalyzes the transfer of the ribosyl-5-phosphate group from 5-phospho-alpha-D-ribose 1-diphosphate (PRPP) to the N9 position of the 6-oxopurines guanine and xanthine to form the corresponding ribonucleotides GMP (guanosine 5'-monophosphate) and XMP (xanthosine 5'-monophosphate), with the release of PPi. To a lesser extent, also acts on hypoxanthine.</text>
</comment>
<comment type="catalytic activity">
    <reaction evidence="1">
        <text>GMP + diphosphate = guanine + 5-phospho-alpha-D-ribose 1-diphosphate</text>
        <dbReference type="Rhea" id="RHEA:25424"/>
        <dbReference type="ChEBI" id="CHEBI:16235"/>
        <dbReference type="ChEBI" id="CHEBI:33019"/>
        <dbReference type="ChEBI" id="CHEBI:58017"/>
        <dbReference type="ChEBI" id="CHEBI:58115"/>
    </reaction>
    <physiologicalReaction direction="right-to-left" evidence="1">
        <dbReference type="Rhea" id="RHEA:25426"/>
    </physiologicalReaction>
</comment>
<comment type="catalytic activity">
    <reaction evidence="1">
        <text>XMP + diphosphate = xanthine + 5-phospho-alpha-D-ribose 1-diphosphate</text>
        <dbReference type="Rhea" id="RHEA:10800"/>
        <dbReference type="ChEBI" id="CHEBI:17712"/>
        <dbReference type="ChEBI" id="CHEBI:33019"/>
        <dbReference type="ChEBI" id="CHEBI:57464"/>
        <dbReference type="ChEBI" id="CHEBI:58017"/>
        <dbReference type="EC" id="2.4.2.22"/>
    </reaction>
    <physiologicalReaction direction="right-to-left" evidence="1">
        <dbReference type="Rhea" id="RHEA:10802"/>
    </physiologicalReaction>
</comment>
<comment type="catalytic activity">
    <reaction evidence="1">
        <text>IMP + diphosphate = hypoxanthine + 5-phospho-alpha-D-ribose 1-diphosphate</text>
        <dbReference type="Rhea" id="RHEA:17973"/>
        <dbReference type="ChEBI" id="CHEBI:17368"/>
        <dbReference type="ChEBI" id="CHEBI:33019"/>
        <dbReference type="ChEBI" id="CHEBI:58017"/>
        <dbReference type="ChEBI" id="CHEBI:58053"/>
    </reaction>
    <physiologicalReaction direction="right-to-left" evidence="1">
        <dbReference type="Rhea" id="RHEA:17975"/>
    </physiologicalReaction>
</comment>
<comment type="cofactor">
    <cofactor evidence="1">
        <name>Mg(2+)</name>
        <dbReference type="ChEBI" id="CHEBI:18420"/>
    </cofactor>
</comment>
<comment type="pathway">
    <text evidence="1">Purine metabolism; GMP biosynthesis via salvage pathway; GMP from guanine: step 1/1.</text>
</comment>
<comment type="pathway">
    <text evidence="1">Purine metabolism; XMP biosynthesis via salvage pathway; XMP from xanthine: step 1/1.</text>
</comment>
<comment type="subunit">
    <text evidence="1">Homotetramer.</text>
</comment>
<comment type="subcellular location">
    <subcellularLocation>
        <location evidence="1">Cell inner membrane</location>
        <topology evidence="1">Peripheral membrane protein</topology>
    </subcellularLocation>
</comment>
<comment type="similarity">
    <text evidence="1">Belongs to the purine/pyrimidine phosphoribosyltransferase family. XGPT subfamily.</text>
</comment>
<protein>
    <recommendedName>
        <fullName evidence="1">Xanthine-guanine phosphoribosyltransferase</fullName>
        <shortName evidence="1">XGPRT</shortName>
        <ecNumber evidence="1">2.4.2.-</ecNumber>
        <ecNumber evidence="1">2.4.2.22</ecNumber>
    </recommendedName>
    <alternativeName>
        <fullName evidence="1">Xanthine phosphoribosyltransferase</fullName>
    </alternativeName>
</protein>
<feature type="chain" id="PRO_0000261021" description="Xanthine-guanine phosphoribosyltransferase">
    <location>
        <begin position="1"/>
        <end position="176"/>
    </location>
</feature>
<feature type="binding site" evidence="1">
    <location>
        <begin position="51"/>
        <end position="52"/>
    </location>
    <ligand>
        <name>5-phospho-alpha-D-ribose 1-diphosphate</name>
        <dbReference type="ChEBI" id="CHEBI:58017"/>
    </ligand>
</feature>
<feature type="binding site" evidence="1">
    <location>
        <position position="88"/>
    </location>
    <ligand>
        <name>5-phospho-alpha-D-ribose 1-diphosphate</name>
        <dbReference type="ChEBI" id="CHEBI:58017"/>
    </ligand>
</feature>
<feature type="binding site" evidence="1">
    <location>
        <position position="88"/>
    </location>
    <ligand>
        <name>GMP</name>
        <dbReference type="ChEBI" id="CHEBI:58115"/>
    </ligand>
</feature>
<feature type="binding site" evidence="1">
    <location>
        <begin position="111"/>
        <end position="119"/>
    </location>
    <ligand>
        <name>5-phospho-alpha-D-ribose 1-diphosphate</name>
        <dbReference type="ChEBI" id="CHEBI:58017"/>
    </ligand>
</feature>
<feature type="binding site" evidence="1">
    <location>
        <position position="112"/>
    </location>
    <ligand>
        <name>Mg(2+)</name>
        <dbReference type="ChEBI" id="CHEBI:18420"/>
    </ligand>
</feature>
<feature type="binding site" evidence="1">
    <location>
        <begin position="115"/>
        <end position="119"/>
    </location>
    <ligand>
        <name>GMP</name>
        <dbReference type="ChEBI" id="CHEBI:58115"/>
    </ligand>
</feature>
<feature type="binding site" evidence="1">
    <location>
        <position position="115"/>
    </location>
    <ligand>
        <name>guanine</name>
        <dbReference type="ChEBI" id="CHEBI:16235"/>
    </ligand>
</feature>
<feature type="binding site" evidence="1">
    <location>
        <position position="115"/>
    </location>
    <ligand>
        <name>xanthine</name>
        <dbReference type="ChEBI" id="CHEBI:17712"/>
    </ligand>
</feature>
<feature type="binding site" evidence="1">
    <location>
        <begin position="157"/>
        <end position="158"/>
    </location>
    <ligand>
        <name>GMP</name>
        <dbReference type="ChEBI" id="CHEBI:58115"/>
    </ligand>
</feature>
<feature type="binding site" evidence="1">
    <location>
        <position position="158"/>
    </location>
    <ligand>
        <name>guanine</name>
        <dbReference type="ChEBI" id="CHEBI:16235"/>
    </ligand>
</feature>
<feature type="binding site" evidence="1">
    <location>
        <position position="158"/>
    </location>
    <ligand>
        <name>xanthine</name>
        <dbReference type="ChEBI" id="CHEBI:17712"/>
    </ligand>
</feature>
<accession>Q1GHI7</accession>
<proteinExistence type="inferred from homology"/>
<keyword id="KW-0997">Cell inner membrane</keyword>
<keyword id="KW-1003">Cell membrane</keyword>
<keyword id="KW-0328">Glycosyltransferase</keyword>
<keyword id="KW-0460">Magnesium</keyword>
<keyword id="KW-0472">Membrane</keyword>
<keyword id="KW-0479">Metal-binding</keyword>
<keyword id="KW-0660">Purine salvage</keyword>
<keyword id="KW-1185">Reference proteome</keyword>
<keyword id="KW-0808">Transferase</keyword>
<organism>
    <name type="scientific">Ruegeria sp. (strain TM1040)</name>
    <name type="common">Silicibacter sp.</name>
    <dbReference type="NCBI Taxonomy" id="292414"/>
    <lineage>
        <taxon>Bacteria</taxon>
        <taxon>Pseudomonadati</taxon>
        <taxon>Pseudomonadota</taxon>
        <taxon>Alphaproteobacteria</taxon>
        <taxon>Rhodobacterales</taxon>
        <taxon>Roseobacteraceae</taxon>
        <taxon>Ruegeria</taxon>
    </lineage>
</organism>
<gene>
    <name evidence="1" type="primary">gpt</name>
    <name type="ordered locus">TM1040_1146</name>
</gene>
<evidence type="ECO:0000255" key="1">
    <source>
        <dbReference type="HAMAP-Rule" id="MF_01903"/>
    </source>
</evidence>
<reference key="1">
    <citation type="submission" date="2006-05" db="EMBL/GenBank/DDBJ databases">
        <title>Complete sequence of chromosome of Silicibacter sp. TM1040.</title>
        <authorList>
            <consortium name="US DOE Joint Genome Institute"/>
            <person name="Copeland A."/>
            <person name="Lucas S."/>
            <person name="Lapidus A."/>
            <person name="Barry K."/>
            <person name="Detter J.C."/>
            <person name="Glavina del Rio T."/>
            <person name="Hammon N."/>
            <person name="Israni S."/>
            <person name="Dalin E."/>
            <person name="Tice H."/>
            <person name="Pitluck S."/>
            <person name="Brettin T."/>
            <person name="Bruce D."/>
            <person name="Han C."/>
            <person name="Tapia R."/>
            <person name="Goodwin L."/>
            <person name="Thompson L.S."/>
            <person name="Gilna P."/>
            <person name="Schmutz J."/>
            <person name="Larimer F."/>
            <person name="Land M."/>
            <person name="Hauser L."/>
            <person name="Kyrpides N."/>
            <person name="Kim E."/>
            <person name="Belas R."/>
            <person name="Moran M.A."/>
            <person name="Buchan A."/>
            <person name="Gonzalez J.M."/>
            <person name="Schell M.A."/>
            <person name="Sun F."/>
            <person name="Richardson P."/>
        </authorList>
    </citation>
    <scope>NUCLEOTIDE SEQUENCE [LARGE SCALE GENOMIC DNA]</scope>
    <source>
        <strain>TM1040</strain>
    </source>
</reference>
<sequence>MSTKDPNRLPHEKGFHISWDQIHRDSRALAWRLDGLGPDDGHWRAVVAITRGGMAPAMIVARELDIRTVDTISVKSYHSGGGKADQRREAEVLKSPDADIMGDGTGILIVDDLVDSGKTLELVRTLYPKAHFATVYAKPQGEPQVDTFITGVSQDTWIFFPWDMALQYVEPYRGTD</sequence>
<dbReference type="EC" id="2.4.2.-" evidence="1"/>
<dbReference type="EC" id="2.4.2.22" evidence="1"/>
<dbReference type="EMBL" id="CP000377">
    <property type="protein sequence ID" value="ABF63879.1"/>
    <property type="molecule type" value="Genomic_DNA"/>
</dbReference>
<dbReference type="RefSeq" id="WP_011538486.1">
    <property type="nucleotide sequence ID" value="NC_008044.1"/>
</dbReference>
<dbReference type="SMR" id="Q1GHI7"/>
<dbReference type="STRING" id="292414.TM1040_1146"/>
<dbReference type="KEGG" id="sit:TM1040_1146"/>
<dbReference type="eggNOG" id="COG2236">
    <property type="taxonomic scope" value="Bacteria"/>
</dbReference>
<dbReference type="HOGENOM" id="CLU_080904_3_0_5"/>
<dbReference type="OrthoDB" id="9789690at2"/>
<dbReference type="UniPathway" id="UPA00602">
    <property type="reaction ID" value="UER00658"/>
</dbReference>
<dbReference type="UniPathway" id="UPA00909">
    <property type="reaction ID" value="UER00887"/>
</dbReference>
<dbReference type="Proteomes" id="UP000000636">
    <property type="component" value="Chromosome"/>
</dbReference>
<dbReference type="GO" id="GO:0005886">
    <property type="term" value="C:plasma membrane"/>
    <property type="evidence" value="ECO:0007669"/>
    <property type="project" value="UniProtKB-SubCell"/>
</dbReference>
<dbReference type="GO" id="GO:0052657">
    <property type="term" value="F:guanine phosphoribosyltransferase activity"/>
    <property type="evidence" value="ECO:0007669"/>
    <property type="project" value="RHEA"/>
</dbReference>
<dbReference type="GO" id="GO:0004422">
    <property type="term" value="F:hypoxanthine phosphoribosyltransferase activity"/>
    <property type="evidence" value="ECO:0007669"/>
    <property type="project" value="RHEA"/>
</dbReference>
<dbReference type="GO" id="GO:0000287">
    <property type="term" value="F:magnesium ion binding"/>
    <property type="evidence" value="ECO:0007669"/>
    <property type="project" value="UniProtKB-UniRule"/>
</dbReference>
<dbReference type="GO" id="GO:0000310">
    <property type="term" value="F:xanthine phosphoribosyltransferase activity"/>
    <property type="evidence" value="ECO:0007669"/>
    <property type="project" value="UniProtKB-UniRule"/>
</dbReference>
<dbReference type="GO" id="GO:0032263">
    <property type="term" value="P:GMP salvage"/>
    <property type="evidence" value="ECO:0007669"/>
    <property type="project" value="UniProtKB-UniRule"/>
</dbReference>
<dbReference type="GO" id="GO:0006166">
    <property type="term" value="P:purine ribonucleoside salvage"/>
    <property type="evidence" value="ECO:0007669"/>
    <property type="project" value="UniProtKB-KW"/>
</dbReference>
<dbReference type="GO" id="GO:0032265">
    <property type="term" value="P:XMP salvage"/>
    <property type="evidence" value="ECO:0007669"/>
    <property type="project" value="UniProtKB-UniRule"/>
</dbReference>
<dbReference type="CDD" id="cd06223">
    <property type="entry name" value="PRTases_typeI"/>
    <property type="match status" value="1"/>
</dbReference>
<dbReference type="Gene3D" id="3.40.50.2020">
    <property type="match status" value="1"/>
</dbReference>
<dbReference type="HAMAP" id="MF_01903">
    <property type="entry name" value="XGPRT"/>
    <property type="match status" value="1"/>
</dbReference>
<dbReference type="InterPro" id="IPR000836">
    <property type="entry name" value="PRibTrfase_dom"/>
</dbReference>
<dbReference type="InterPro" id="IPR029057">
    <property type="entry name" value="PRTase-like"/>
</dbReference>
<dbReference type="InterPro" id="IPR023747">
    <property type="entry name" value="Xanthine_Guanine_PRibTrfase"/>
</dbReference>
<dbReference type="NCBIfam" id="NF006613">
    <property type="entry name" value="PRK09177.1"/>
    <property type="match status" value="1"/>
</dbReference>
<dbReference type="PANTHER" id="PTHR39563">
    <property type="entry name" value="XANTHINE PHOSPHORIBOSYLTRANSFERASE"/>
    <property type="match status" value="1"/>
</dbReference>
<dbReference type="PANTHER" id="PTHR39563:SF1">
    <property type="entry name" value="XANTHINE-GUANINE PHOSPHORIBOSYLTRANSFERASE"/>
    <property type="match status" value="1"/>
</dbReference>
<dbReference type="Pfam" id="PF00156">
    <property type="entry name" value="Pribosyltran"/>
    <property type="match status" value="1"/>
</dbReference>
<dbReference type="SUPFAM" id="SSF53271">
    <property type="entry name" value="PRTase-like"/>
    <property type="match status" value="1"/>
</dbReference>
<dbReference type="PROSITE" id="PS00103">
    <property type="entry name" value="PUR_PYR_PR_TRANSFER"/>
    <property type="match status" value="1"/>
</dbReference>
<name>XGPT_RUEST</name>